<accession>P31841</accession>
<reference key="1">
    <citation type="journal article" date="1991" name="J. Gen. Virol.">
        <title>Analysis of the glycoprotein gene of Tacaribe virus and neutralization-resistant variants.</title>
        <authorList>
            <person name="Allison L.M.C."/>
            <person name="Salter M.W.A.P."/>
            <person name="Kiguwa S."/>
            <person name="Howard C.R."/>
        </authorList>
    </citation>
    <scope>NUCLEOTIDE SEQUENCE</scope>
</reference>
<gene>
    <name evidence="2" type="primary">GPC</name>
    <name type="synonym">GP-C</name>
</gene>
<proteinExistence type="inferred from homology"/>
<dbReference type="PIR" id="JQ1454">
    <property type="entry name" value="VGXPT5"/>
</dbReference>
<dbReference type="SMR" id="P31841"/>
<dbReference type="GlyCosmos" id="P31841">
    <property type="glycosylation" value="8 sites, No reported glycans"/>
</dbReference>
<dbReference type="GO" id="GO:0044167">
    <property type="term" value="C:host cell endoplasmic reticulum membrane"/>
    <property type="evidence" value="ECO:0007669"/>
    <property type="project" value="UniProtKB-SubCell"/>
</dbReference>
<dbReference type="GO" id="GO:0044178">
    <property type="term" value="C:host cell Golgi membrane"/>
    <property type="evidence" value="ECO:0007669"/>
    <property type="project" value="UniProtKB-SubCell"/>
</dbReference>
<dbReference type="GO" id="GO:0020002">
    <property type="term" value="C:host cell plasma membrane"/>
    <property type="evidence" value="ECO:0007669"/>
    <property type="project" value="UniProtKB-SubCell"/>
</dbReference>
<dbReference type="GO" id="GO:0016020">
    <property type="term" value="C:membrane"/>
    <property type="evidence" value="ECO:0007669"/>
    <property type="project" value="UniProtKB-UniRule"/>
</dbReference>
<dbReference type="GO" id="GO:0019031">
    <property type="term" value="C:viral envelope"/>
    <property type="evidence" value="ECO:0007669"/>
    <property type="project" value="UniProtKB-UniRule"/>
</dbReference>
<dbReference type="GO" id="GO:0055036">
    <property type="term" value="C:virion membrane"/>
    <property type="evidence" value="ECO:0007669"/>
    <property type="project" value="UniProtKB-SubCell"/>
</dbReference>
<dbReference type="GO" id="GO:0046872">
    <property type="term" value="F:metal ion binding"/>
    <property type="evidence" value="ECO:0007669"/>
    <property type="project" value="UniProtKB-KW"/>
</dbReference>
<dbReference type="GO" id="GO:0039654">
    <property type="term" value="P:fusion of virus membrane with host endosome membrane"/>
    <property type="evidence" value="ECO:0007669"/>
    <property type="project" value="UniProtKB-UniRule"/>
</dbReference>
<dbReference type="GO" id="GO:0019065">
    <property type="term" value="P:receptor-mediated endocytosis of virus by host cell"/>
    <property type="evidence" value="ECO:0007669"/>
    <property type="project" value="UniProtKB-UniRule"/>
</dbReference>
<dbReference type="GO" id="GO:0019062">
    <property type="term" value="P:virion attachment to host cell"/>
    <property type="evidence" value="ECO:0007669"/>
    <property type="project" value="UniProtKB-UniRule"/>
</dbReference>
<dbReference type="Gene3D" id="6.10.140.1590">
    <property type="match status" value="1"/>
</dbReference>
<dbReference type="Gene3D" id="2.20.28.180">
    <property type="entry name" value="Arenavirus glycoprotein, zinc binding domain"/>
    <property type="match status" value="1"/>
</dbReference>
<dbReference type="HAMAP" id="MF_04084">
    <property type="entry name" value="ARENA_GPC"/>
    <property type="match status" value="1"/>
</dbReference>
<dbReference type="InterPro" id="IPR001535">
    <property type="entry name" value="Arena_glycoprot"/>
</dbReference>
<dbReference type="InterPro" id="IPR043015">
    <property type="entry name" value="Arena_glycoprot_zinc-bd"/>
</dbReference>
<dbReference type="Pfam" id="PF00798">
    <property type="entry name" value="Arena_glycoprot"/>
    <property type="match status" value="1"/>
</dbReference>
<dbReference type="PIRSF" id="PIRSF004028">
    <property type="entry name" value="GPC_ArenaV"/>
    <property type="match status" value="1"/>
</dbReference>
<feature type="initiator methionine" description="Removed; by host" evidence="2">
    <location>
        <position position="1"/>
    </location>
</feature>
<feature type="chain" id="PRO_0000353866" description="Pre-glycoprotein polyprotein GP complex" evidence="2">
    <location>
        <begin position="2"/>
        <end position="483"/>
    </location>
</feature>
<feature type="chain" id="PRO_0000353867" description="Stable signal peptide" evidence="2">
    <location>
        <begin position="2"/>
        <end position="58"/>
    </location>
</feature>
<feature type="chain" id="PRO_0000036613" description="Glycoprotein G1" evidence="2">
    <location>
        <begin position="59"/>
        <end position="249"/>
    </location>
</feature>
<feature type="chain" id="PRO_0000036614" description="Glycoprotein G2" evidence="2">
    <location>
        <begin position="250"/>
        <end position="483"/>
    </location>
</feature>
<feature type="topological domain" description="Extracellular" evidence="2">
    <location>
        <begin position="2"/>
        <end position="17"/>
    </location>
</feature>
<feature type="transmembrane region" description="Helical" evidence="2">
    <location>
        <begin position="18"/>
        <end position="32"/>
    </location>
</feature>
<feature type="topological domain" description="Cytoplasmic" evidence="2">
    <location>
        <position position="33"/>
    </location>
</feature>
<feature type="transmembrane region" description="Helical" evidence="2">
    <location>
        <begin position="34"/>
        <end position="53"/>
    </location>
</feature>
<feature type="topological domain" description="Extracellular" evidence="2">
    <location>
        <begin position="54"/>
        <end position="58"/>
    </location>
</feature>
<feature type="topological domain" description="Extracellular" evidence="2">
    <location>
        <begin position="59"/>
        <end position="422"/>
    </location>
</feature>
<feature type="transmembrane region" description="Helical" evidence="2">
    <location>
        <begin position="423"/>
        <end position="443"/>
    </location>
</feature>
<feature type="topological domain" description="Cytoplasmic" evidence="2">
    <location>
        <begin position="444"/>
        <end position="483"/>
    </location>
</feature>
<feature type="binding site" evidence="2">
    <location>
        <position position="57"/>
    </location>
    <ligand>
        <name>Zn(2+)</name>
        <dbReference type="ChEBI" id="CHEBI:29105"/>
        <label>1</label>
    </ligand>
</feature>
<feature type="binding site" evidence="2">
    <location>
        <position position="445"/>
    </location>
    <ligand>
        <name>Zn(2+)</name>
        <dbReference type="ChEBI" id="CHEBI:29105"/>
        <label>2</label>
    </ligand>
</feature>
<feature type="binding site" evidence="2">
    <location>
        <position position="447"/>
    </location>
    <ligand>
        <name>Zn(2+)</name>
        <dbReference type="ChEBI" id="CHEBI:29105"/>
        <label>2</label>
    </ligand>
</feature>
<feature type="binding site" evidence="2">
    <location>
        <position position="453"/>
    </location>
    <ligand>
        <name>Zn(2+)</name>
        <dbReference type="ChEBI" id="CHEBI:29105"/>
        <label>2</label>
    </ligand>
</feature>
<feature type="binding site" evidence="2">
    <location>
        <position position="457"/>
    </location>
    <ligand>
        <name>Zn(2+)</name>
        <dbReference type="ChEBI" id="CHEBI:29105"/>
        <label>1</label>
    </ligand>
</feature>
<feature type="binding site" evidence="2">
    <location>
        <position position="465"/>
    </location>
    <ligand>
        <name>Zn(2+)</name>
        <dbReference type="ChEBI" id="CHEBI:29105"/>
        <label>1</label>
    </ligand>
</feature>
<feature type="binding site" evidence="2">
    <location>
        <position position="467"/>
    </location>
    <ligand>
        <name>Zn(2+)</name>
        <dbReference type="ChEBI" id="CHEBI:29105"/>
        <label>1</label>
    </ligand>
</feature>
<feature type="binding site" evidence="2">
    <location>
        <position position="483"/>
    </location>
    <ligand>
        <name>Zn(2+)</name>
        <dbReference type="ChEBI" id="CHEBI:29105"/>
        <label>2</label>
    </ligand>
</feature>
<feature type="site" description="Important for GP-C-mediated membrane fusion" evidence="1">
    <location>
        <position position="33"/>
    </location>
</feature>
<feature type="site" description="Cleavage; by host signal peptidase" evidence="2">
    <location>
        <begin position="58"/>
        <end position="59"/>
    </location>
</feature>
<feature type="site" description="Cleavage; by host MBTPS1" evidence="2">
    <location>
        <begin position="249"/>
        <end position="250"/>
    </location>
</feature>
<feature type="lipid moiety-binding region" description="N-myristoyl glycine; by host" evidence="2">
    <location>
        <position position="2"/>
    </location>
</feature>
<feature type="glycosylation site" description="N-linked (GlcNAc...) asparagine; by host" evidence="2">
    <location>
        <position position="83"/>
    </location>
</feature>
<feature type="glycosylation site" description="N-linked (GlcNAc...) asparagine; by host" evidence="2">
    <location>
        <position position="95"/>
    </location>
</feature>
<feature type="glycosylation site" description="N-linked (GlcNAc...) asparagine; by host" evidence="2">
    <location>
        <position position="164"/>
    </location>
</feature>
<feature type="glycosylation site" description="N-linked (GlcNAc...) asparagine; by host" evidence="2">
    <location>
        <position position="176"/>
    </location>
</feature>
<feature type="glycosylation site" description="N-linked (GlcNAc...) asparagine; by host" evidence="2">
    <location>
        <position position="355"/>
    </location>
</feature>
<feature type="glycosylation site" description="N-linked (GlcNAc...) asparagine; by host" evidence="2">
    <location>
        <position position="363"/>
    </location>
</feature>
<feature type="glycosylation site" description="N-linked (GlcNAc...) asparagine; by host" evidence="2">
    <location>
        <position position="380"/>
    </location>
</feature>
<feature type="glycosylation site" description="N-linked (GlcNAc...) asparagine; by host" evidence="2">
    <location>
        <position position="385"/>
    </location>
</feature>
<feature type="disulfide bond" evidence="2">
    <location>
        <begin position="92"/>
        <end position="224"/>
    </location>
</feature>
<feature type="disulfide bond" evidence="2">
    <location>
        <begin position="134"/>
        <end position="162"/>
    </location>
</feature>
<feature type="disulfide bond" evidence="2">
    <location>
        <begin position="205"/>
        <end position="211"/>
    </location>
</feature>
<feature type="disulfide bond" evidence="2">
    <location>
        <begin position="269"/>
        <end position="282"/>
    </location>
</feature>
<feature type="disulfide bond" evidence="2">
    <location>
        <begin position="291"/>
        <end position="300"/>
    </location>
</feature>
<feature type="disulfide bond" evidence="2">
    <location>
        <begin position="354"/>
        <end position="375"/>
    </location>
</feature>
<keyword id="KW-1015">Disulfide bond</keyword>
<keyword id="KW-1170">Fusion of virus membrane with host endosomal membrane</keyword>
<keyword id="KW-1168">Fusion of virus membrane with host membrane</keyword>
<keyword id="KW-0325">Glycoprotein</keyword>
<keyword id="KW-1032">Host cell membrane</keyword>
<keyword id="KW-1038">Host endoplasmic reticulum</keyword>
<keyword id="KW-1040">Host Golgi apparatus</keyword>
<keyword id="KW-1043">Host membrane</keyword>
<keyword id="KW-0945">Host-virus interaction</keyword>
<keyword id="KW-0449">Lipoprotein</keyword>
<keyword id="KW-0472">Membrane</keyword>
<keyword id="KW-0479">Metal-binding</keyword>
<keyword id="KW-0519">Myristate</keyword>
<keyword id="KW-0812">Transmembrane</keyword>
<keyword id="KW-1133">Transmembrane helix</keyword>
<keyword id="KW-1161">Viral attachment to host cell</keyword>
<keyword id="KW-0261">Viral envelope protein</keyword>
<keyword id="KW-1162">Viral penetration into host cytoplasm</keyword>
<keyword id="KW-0946">Virion</keyword>
<keyword id="KW-1164">Virus endocytosis by host</keyword>
<keyword id="KW-1160">Virus entry into host cell</keyword>
<keyword id="KW-0862">Zinc</keyword>
<organism>
    <name type="scientific">Tacaribe virus (strain V5)</name>
    <name type="common">TCRV</name>
    <dbReference type="NCBI Taxonomy" id="31615"/>
    <lineage>
        <taxon>Viruses</taxon>
        <taxon>Riboviria</taxon>
        <taxon>Orthornavirae</taxon>
        <taxon>Negarnaviricota</taxon>
        <taxon>Polyploviricotina</taxon>
        <taxon>Ellioviricetes</taxon>
        <taxon>Bunyavirales</taxon>
        <taxon>Arenaviridae</taxon>
        <taxon>Mammarenavirus</taxon>
        <taxon>Tacaribe virus</taxon>
    </lineage>
</organism>
<protein>
    <recommendedName>
        <fullName evidence="2">Pre-glycoprotein polyprotein GP complex</fullName>
        <shortName evidence="2">Pre-GP-C</shortName>
    </recommendedName>
    <component>
        <recommendedName>
            <fullName evidence="2">Stable signal peptide</fullName>
            <shortName evidence="2">SSP</shortName>
        </recommendedName>
    </component>
    <component>
        <recommendedName>
            <fullName evidence="2">Glycoprotein G1</fullName>
            <shortName evidence="2">GP1</shortName>
        </recommendedName>
    </component>
    <component>
        <recommendedName>
            <fullName evidence="2">Glycoprotein G2</fullName>
            <shortName evidence="2">GP2</shortName>
        </recommendedName>
    </component>
</protein>
<organismHost>
    <name type="scientific">Artibeus</name>
    <name type="common">neotropical fruit bats</name>
    <dbReference type="NCBI Taxonomy" id="9416"/>
</organismHost>
<comment type="function">
    <molecule>Glycoprotein G2</molecule>
    <text evidence="2">Class I viral fusion protein that directs fusion of viral and host endosomal membranes, leading to delivery of the nucleocapsid into the cytoplasm. Membrane fusion is mediated by irreversible conformational changes induced upon acidification in the endosome.</text>
</comment>
<comment type="function">
    <text evidence="2">Stable signal peptide (SSP): cleaved and functions as a signal peptide. In addition, it is also retained as the third component of the GP complex. The SSP is required for efficient glycoprotein expression, post-translational maturation cleavage of GP1 and GP2, glycoprotein transport to the cell surface plasma membrane, formation of infectious virus particles, and acid pH-dependent glycoprotein-mediated cell fusion.</text>
</comment>
<comment type="function">
    <molecule>Glycoprotein G1</molecule>
    <text evidence="2">Interacts with the host receptor.</text>
</comment>
<comment type="subunit">
    <molecule>Glycoprotein G1</molecule>
    <text evidence="2">Homotetramer; disulfide-linked.</text>
</comment>
<comment type="subunit">
    <molecule>Glycoprotein G2</molecule>
    <text evidence="2">Homotetramer. GP2 homotetramers bind through ionic interactions with GP1 homotetramers to form the GP complex together with the stable signal peptide. The GP-C polyprotein interacts with the host protease MBTPS1/SKI-1 resulting in the polyprotein processing.</text>
</comment>
<comment type="subcellular location">
    <molecule>Glycoprotein G1</molecule>
    <subcellularLocation>
        <location evidence="2">Virion membrane</location>
        <topology evidence="2">Peripheral membrane protein</topology>
    </subcellularLocation>
    <subcellularLocation>
        <location evidence="2">Host endoplasmic reticulum membrane</location>
        <topology evidence="2">Peripheral membrane protein</topology>
    </subcellularLocation>
    <subcellularLocation>
        <location evidence="2">Host Golgi apparatus membrane</location>
        <topology evidence="2">Peripheral membrane protein</topology>
    </subcellularLocation>
    <subcellularLocation>
        <location evidence="2">Host cell membrane</location>
        <topology evidence="2">Peripheral membrane protein</topology>
    </subcellularLocation>
</comment>
<comment type="subcellular location">
    <molecule>Glycoprotein G2</molecule>
    <subcellularLocation>
        <location evidence="2">Virion membrane</location>
        <topology evidence="2">Single-pass membrane protein</topology>
    </subcellularLocation>
    <subcellularLocation>
        <location evidence="2">Host endoplasmic reticulum membrane</location>
        <topology evidence="2">Single-pass membrane protein</topology>
    </subcellularLocation>
    <subcellularLocation>
        <location evidence="2">Host Golgi apparatus membrane</location>
        <topology evidence="2">Single-pass membrane protein</topology>
    </subcellularLocation>
    <subcellularLocation>
        <location evidence="2">Host cell membrane</location>
        <topology evidence="2">Single-pass membrane protein</topology>
    </subcellularLocation>
    <text evidence="2">Binding to the stable signal peptide masks endogenous ER localization signals in the cytoplasmic domain of G2 to ensure that only the fully assembled, tripartite GP complex is transported for virion assembly.</text>
</comment>
<comment type="subcellular location">
    <molecule>Stable signal peptide</molecule>
    <subcellularLocation>
        <location evidence="2">Virion membrane</location>
        <topology evidence="2">Multi-pass membrane protein</topology>
    </subcellularLocation>
    <subcellularLocation>
        <location evidence="2">Host endoplasmic reticulum membrane</location>
        <topology evidence="2">Multi-pass membrane protein</topology>
    </subcellularLocation>
    <subcellularLocation>
        <location evidence="2">Host Golgi apparatus membrane</location>
        <topology evidence="2">Multi-pass membrane protein</topology>
    </subcellularLocation>
    <subcellularLocation>
        <location evidence="2">Host cell membrane</location>
        <topology evidence="2">Multi-pass membrane protein</topology>
    </subcellularLocation>
</comment>
<comment type="domain">
    <text evidence="2">The cytoplasmic domain of GP2 plays a role in ER location. It also contains a zinc-binding domain that allows SSP retention in the GPC complex by accepting a cysteine from SSP as the fourth ligand.</text>
</comment>
<comment type="PTM">
    <molecule>Pre-glycoprotein polyprotein GP complex</molecule>
    <text evidence="2">Specific enzymatic cleavages in vivo yield mature proteins. GP-C polyprotein is cleaved in the endoplasmic reticulum by the host protease MBTPS1. Only cleaved glycoprotein is incorporated into virions.</text>
</comment>
<comment type="PTM">
    <molecule>Stable signal peptide</molecule>
    <text evidence="2">The SSP remains stably associated with the GP complex following cleavage by signal peptidase and plays crucial roles in the trafficking of GP through the secretory pathway.</text>
</comment>
<comment type="PTM">
    <molecule>Stable signal peptide</molecule>
    <text evidence="2">Myristoylation is necessary for GP2-mediated fusion activity.</text>
</comment>
<comment type="similarity">
    <text evidence="2">Belongs to the arenaviridae GPC protein family.</text>
</comment>
<evidence type="ECO:0000250" key="1">
    <source>
        <dbReference type="UniProtKB" id="P26313"/>
    </source>
</evidence>
<evidence type="ECO:0000255" key="2">
    <source>
        <dbReference type="HAMAP-Rule" id="MF_04084"/>
    </source>
</evidence>
<name>GLYC_TACV5</name>
<sequence length="483" mass="55598">MGQFISFMQEIPIFLQEALNIALVAVSLICIVKGLVNLYRCGLFQLMVFLVLAGRSCSEETFKIGMHTQFQEVSLSLSALLTNQSHELPMLCLANKTHLYLKSGRSSFKINIDSVTVLTRSADVFVHSPKLGSCFESDEEWVVAWWIEAIGHRWDQDPGLLCRNKTKTEGKLIQINISRADGNVHYGWRLKNGLDHIYRGREEPCFEGEQCLIKIQPEDWPTDCKADHTNTFRFLSRSQKSIAVGRTLKAFFSWSLTDPLGNVPPGGYCLEKWMLVASELKCFGNTAIAKCNQNHDSEFCDMLRLFDYNKNAIKTLNEETKTRVNVLSHTINALISDNLLMKNKIRELMSVPYCNYTRFWYVNHTLSGQHSLPRCWMIRNNSYLNSSEFRNEWILESDFLISEMLSKEYSERQGRTPITLVDICFWSTVFFTSTLFLHLIGFPTHEHIRGEGCPLPHRLNSMGGCRCGKYLPLKKPTIWHRRH</sequence>